<sequence length="702" mass="78757">MKLILSTLIVFIHTLLVSALPTKEGSDPNSAKKYLVSDLPGLHENITPDNSIPLMFAGQLEIYPETDTHYFFWKFSDSNPETVTNRTIFWLNGGPGCSSMDGALLETGPFRINSQQQVISNNGSWHRMGDIIYVDQPAGTGFSYSDTYITDLDQVAEYFLKFMEKYYELFPEEIGYEIYFAGESYAGQYIPYIADAILQRNKKLVDGEHKYDLRGVLIGNGWVSPNEQSLSYLPFFKDHGLIDVHHPKWATLLAKHEQCQKIVNKIDSTFDDGVVHYYEVSSSTCEAILTDLLEYTQDTASEKDQRCVNMYDYTLRDSYPSCGMNWPYELVNVGPFLRQEKVMHQLNLINLKKWNECNGRVGRTFQARHSIPAVHLLPELAKEIPVMLFNGANDIICNSQGVLSYLQKLQWNGETGFTNKDNQISWIYDNKEVGYIIWERNISFINIYNSSHMVPYDLPDVSRALIDLITGKYDEKDVDGKKSFVTYPLGSRKESDASANGEENAGSDKVPGDSPSQTMDPMISSSTASSSSVESSLSSSTASADSDSTSSKFTRLIQLAVILVIFWGVYVLYASYKSRPSSIIKKPTNNTSNVTRSSAGKKKNVQWADQLNQFEDDERTQEPNQGIIAKAIGKITGSKDTRGRYAPVQRGNGNEYIDDIELGEGLSDPNVDEFIIGSDDDEEQGQAHSGAATHNQKQKPMN</sequence>
<name>KEX1_CANAW</name>
<organism>
    <name type="scientific">Candida albicans (strain WO-1)</name>
    <name type="common">Yeast</name>
    <dbReference type="NCBI Taxonomy" id="294748"/>
    <lineage>
        <taxon>Eukaryota</taxon>
        <taxon>Fungi</taxon>
        <taxon>Dikarya</taxon>
        <taxon>Ascomycota</taxon>
        <taxon>Saccharomycotina</taxon>
        <taxon>Pichiomycetes</taxon>
        <taxon>Debaryomycetaceae</taxon>
        <taxon>Candida/Lodderomyces clade</taxon>
        <taxon>Candida</taxon>
    </lineage>
</organism>
<accession>C4YTG0</accession>
<proteinExistence type="inferred from homology"/>
<comment type="function">
    <text evidence="1">Protease with a carboxypeptidase B-like function involved in the C-terminal processing of the lysine and arginine residues from protein precursors. Promotes cell fusion and is involved in the programmed cell death (By similarity).</text>
</comment>
<comment type="catalytic activity">
    <reaction>
        <text>Preferential release of a C-terminal arginine or lysine residue.</text>
        <dbReference type="EC" id="3.4.16.6"/>
    </reaction>
</comment>
<comment type="subcellular location">
    <subcellularLocation>
        <location evidence="1">Golgi apparatus</location>
        <location evidence="1">trans-Golgi network membrane</location>
        <topology evidence="1">Single-pass type I membrane protein</topology>
    </subcellularLocation>
</comment>
<comment type="similarity">
    <text evidence="5">Belongs to the peptidase S10 family.</text>
</comment>
<gene>
    <name type="primary">KEX1</name>
    <name type="ORF">CAWG_05452</name>
</gene>
<evidence type="ECO:0000250" key="1"/>
<evidence type="ECO:0000255" key="2"/>
<evidence type="ECO:0000255" key="3">
    <source>
        <dbReference type="PROSITE-ProRule" id="PRU10075"/>
    </source>
</evidence>
<evidence type="ECO:0000256" key="4">
    <source>
        <dbReference type="SAM" id="MobiDB-lite"/>
    </source>
</evidence>
<evidence type="ECO:0000305" key="5"/>
<feature type="signal peptide" evidence="2">
    <location>
        <begin position="1"/>
        <end position="19"/>
    </location>
</feature>
<feature type="chain" id="PRO_0000411908" description="Pheromone-processing carboxypeptidase KEX1">
    <location>
        <begin position="20"/>
        <end position="702"/>
    </location>
</feature>
<feature type="topological domain" description="Lumenal" evidence="2">
    <location>
        <begin position="20"/>
        <end position="555"/>
    </location>
</feature>
<feature type="transmembrane region" description="Helical" evidence="2">
    <location>
        <begin position="556"/>
        <end position="576"/>
    </location>
</feature>
<feature type="topological domain" description="Cytoplasmic" evidence="2">
    <location>
        <begin position="577"/>
        <end position="702"/>
    </location>
</feature>
<feature type="region of interest" description="Disordered" evidence="4">
    <location>
        <begin position="491"/>
        <end position="531"/>
    </location>
</feature>
<feature type="region of interest" description="Disordered" evidence="4">
    <location>
        <begin position="582"/>
        <end position="603"/>
    </location>
</feature>
<feature type="region of interest" description="Disordered" evidence="4">
    <location>
        <begin position="659"/>
        <end position="702"/>
    </location>
</feature>
<feature type="compositionally biased region" description="Polar residues" evidence="4">
    <location>
        <begin position="587"/>
        <end position="598"/>
    </location>
</feature>
<feature type="compositionally biased region" description="Polar residues" evidence="4">
    <location>
        <begin position="692"/>
        <end position="702"/>
    </location>
</feature>
<feature type="active site" evidence="3">
    <location>
        <position position="184"/>
    </location>
</feature>
<feature type="active site" evidence="3">
    <location>
        <position position="394"/>
    </location>
</feature>
<feature type="active site" evidence="3">
    <location>
        <position position="452"/>
    </location>
</feature>
<feature type="glycosylation site" description="N-linked (GlcNAc...) asparagine" evidence="2">
    <location>
        <position position="85"/>
    </location>
</feature>
<feature type="glycosylation site" description="N-linked (GlcNAc...) asparagine" evidence="2">
    <location>
        <position position="122"/>
    </location>
</feature>
<feature type="glycosylation site" description="N-linked (GlcNAc...) asparagine" evidence="2">
    <location>
        <position position="441"/>
    </location>
</feature>
<feature type="glycosylation site" description="N-linked (GlcNAc...) asparagine" evidence="2">
    <location>
        <position position="449"/>
    </location>
</feature>
<dbReference type="EC" id="3.4.16.6"/>
<dbReference type="EMBL" id="CM000313">
    <property type="protein sequence ID" value="EEQ46901.1"/>
    <property type="molecule type" value="Genomic_DNA"/>
</dbReference>
<dbReference type="SMR" id="C4YTG0"/>
<dbReference type="ESTHER" id="canal-q5afp8">
    <property type="family name" value="Carboxypeptidase_S10"/>
</dbReference>
<dbReference type="MEROPS" id="S10.007"/>
<dbReference type="GlyCosmos" id="C4YTG0">
    <property type="glycosylation" value="4 sites, No reported glycans"/>
</dbReference>
<dbReference type="PaxDb" id="5476-C4YTG0"/>
<dbReference type="VEuPathDB" id="FungiDB:CAWG_05452"/>
<dbReference type="HOGENOM" id="CLU_008523_11_2_1"/>
<dbReference type="OMA" id="PLMFAGQ"/>
<dbReference type="OrthoDB" id="21162at766764"/>
<dbReference type="Proteomes" id="UP000001429">
    <property type="component" value="Chromosome 7"/>
</dbReference>
<dbReference type="GO" id="GO:0016020">
    <property type="term" value="C:membrane"/>
    <property type="evidence" value="ECO:0007669"/>
    <property type="project" value="UniProtKB-KW"/>
</dbReference>
<dbReference type="GO" id="GO:0005802">
    <property type="term" value="C:trans-Golgi network"/>
    <property type="evidence" value="ECO:0007669"/>
    <property type="project" value="TreeGrafter"/>
</dbReference>
<dbReference type="GO" id="GO:0004185">
    <property type="term" value="F:serine-type carboxypeptidase activity"/>
    <property type="evidence" value="ECO:0007669"/>
    <property type="project" value="UniProtKB-EC"/>
</dbReference>
<dbReference type="GO" id="GO:0006915">
    <property type="term" value="P:apoptotic process"/>
    <property type="evidence" value="ECO:0007669"/>
    <property type="project" value="UniProtKB-KW"/>
</dbReference>
<dbReference type="GO" id="GO:0006508">
    <property type="term" value="P:proteolysis"/>
    <property type="evidence" value="ECO:0007669"/>
    <property type="project" value="UniProtKB-KW"/>
</dbReference>
<dbReference type="FunFam" id="3.40.50.1820:FF:000289">
    <property type="entry name" value="Pheromone-processing carboxypeptidase KEX1"/>
    <property type="match status" value="1"/>
</dbReference>
<dbReference type="Gene3D" id="3.40.50.1820">
    <property type="entry name" value="alpha/beta hydrolase"/>
    <property type="match status" value="1"/>
</dbReference>
<dbReference type="InterPro" id="IPR029058">
    <property type="entry name" value="AB_hydrolase_fold"/>
</dbReference>
<dbReference type="InterPro" id="IPR001563">
    <property type="entry name" value="Peptidase_S10"/>
</dbReference>
<dbReference type="InterPro" id="IPR033124">
    <property type="entry name" value="Ser_caboxypep_his_AS"/>
</dbReference>
<dbReference type="PANTHER" id="PTHR11802:SF190">
    <property type="entry name" value="PHEROMONE-PROCESSING CARBOXYPEPTIDASE KEX1"/>
    <property type="match status" value="1"/>
</dbReference>
<dbReference type="PANTHER" id="PTHR11802">
    <property type="entry name" value="SERINE PROTEASE FAMILY S10 SERINE CARBOXYPEPTIDASE"/>
    <property type="match status" value="1"/>
</dbReference>
<dbReference type="Pfam" id="PF00450">
    <property type="entry name" value="Peptidase_S10"/>
    <property type="match status" value="1"/>
</dbReference>
<dbReference type="PRINTS" id="PR00724">
    <property type="entry name" value="CRBOXYPTASEC"/>
</dbReference>
<dbReference type="SUPFAM" id="SSF53474">
    <property type="entry name" value="alpha/beta-Hydrolases"/>
    <property type="match status" value="1"/>
</dbReference>
<dbReference type="PROSITE" id="PS00560">
    <property type="entry name" value="CARBOXYPEPT_SER_HIS"/>
    <property type="match status" value="1"/>
</dbReference>
<protein>
    <recommendedName>
        <fullName>Pheromone-processing carboxypeptidase KEX1</fullName>
        <ecNumber>3.4.16.6</ecNumber>
    </recommendedName>
    <alternativeName>
        <fullName>Carboxypeptidase D</fullName>
    </alternativeName>
</protein>
<reference key="1">
    <citation type="journal article" date="2009" name="Nature">
        <title>Evolution of pathogenicity and sexual reproduction in eight Candida genomes.</title>
        <authorList>
            <person name="Butler G."/>
            <person name="Rasmussen M.D."/>
            <person name="Lin M.F."/>
            <person name="Santos M.A.S."/>
            <person name="Sakthikumar S."/>
            <person name="Munro C.A."/>
            <person name="Rheinbay E."/>
            <person name="Grabherr M."/>
            <person name="Forche A."/>
            <person name="Reedy J.L."/>
            <person name="Agrafioti I."/>
            <person name="Arnaud M.B."/>
            <person name="Bates S."/>
            <person name="Brown A.J.P."/>
            <person name="Brunke S."/>
            <person name="Costanzo M.C."/>
            <person name="Fitzpatrick D.A."/>
            <person name="de Groot P.W.J."/>
            <person name="Harris D."/>
            <person name="Hoyer L.L."/>
            <person name="Hube B."/>
            <person name="Klis F.M."/>
            <person name="Kodira C."/>
            <person name="Lennard N."/>
            <person name="Logue M.E."/>
            <person name="Martin R."/>
            <person name="Neiman A.M."/>
            <person name="Nikolaou E."/>
            <person name="Quail M.A."/>
            <person name="Quinn J."/>
            <person name="Santos M.C."/>
            <person name="Schmitzberger F.F."/>
            <person name="Sherlock G."/>
            <person name="Shah P."/>
            <person name="Silverstein K.A.T."/>
            <person name="Skrzypek M.S."/>
            <person name="Soll D."/>
            <person name="Staggs R."/>
            <person name="Stansfield I."/>
            <person name="Stumpf M.P.H."/>
            <person name="Sudbery P.E."/>
            <person name="Srikantha T."/>
            <person name="Zeng Q."/>
            <person name="Berman J."/>
            <person name="Berriman M."/>
            <person name="Heitman J."/>
            <person name="Gow N.A.R."/>
            <person name="Lorenz M.C."/>
            <person name="Birren B.W."/>
            <person name="Kellis M."/>
            <person name="Cuomo C.A."/>
        </authorList>
    </citation>
    <scope>NUCLEOTIDE SEQUENCE [LARGE SCALE GENOMIC DNA]</scope>
    <source>
        <strain>WO-1</strain>
    </source>
</reference>
<keyword id="KW-0053">Apoptosis</keyword>
<keyword id="KW-0121">Carboxypeptidase</keyword>
<keyword id="KW-0325">Glycoprotein</keyword>
<keyword id="KW-0333">Golgi apparatus</keyword>
<keyword id="KW-0378">Hydrolase</keyword>
<keyword id="KW-0472">Membrane</keyword>
<keyword id="KW-0645">Protease</keyword>
<keyword id="KW-0732">Signal</keyword>
<keyword id="KW-0812">Transmembrane</keyword>
<keyword id="KW-1133">Transmembrane helix</keyword>